<evidence type="ECO:0000250" key="1"/>
<evidence type="ECO:0000255" key="2"/>
<evidence type="ECO:0000269" key="3">
    <source>
    </source>
</evidence>
<evidence type="ECO:0000269" key="4">
    <source>
    </source>
</evidence>
<evidence type="ECO:0000269" key="5">
    <source>
    </source>
</evidence>
<evidence type="ECO:0000305" key="6"/>
<reference key="1">
    <citation type="journal article" date="1998" name="Science">
        <title>Genome sequence of the nematode C. elegans: a platform for investigating biology.</title>
        <authorList>
            <consortium name="The C. elegans sequencing consortium"/>
        </authorList>
    </citation>
    <scope>NUCLEOTIDE SEQUENCE [LARGE SCALE GENOMIC DNA]</scope>
    <source>
        <strain>Bristol N2</strain>
    </source>
</reference>
<reference key="2">
    <citation type="journal article" date="2003" name="Nat. Biotechnol.">
        <title>Lectin affinity capture, isotope-coded tagging and mass spectrometry to identify N-linked glycoproteins.</title>
        <authorList>
            <person name="Kaji H."/>
            <person name="Saito H."/>
            <person name="Yamauchi Y."/>
            <person name="Shinkawa T."/>
            <person name="Taoka M."/>
            <person name="Hirabayashi J."/>
            <person name="Kasai K."/>
            <person name="Takahashi N."/>
            <person name="Isobe T."/>
        </authorList>
    </citation>
    <scope>GLYCOSYLATION [LARGE SCALE ANALYSIS] AT ASN-91</scope>
    <scope>IDENTIFICATION BY MASS SPECTROMETRY</scope>
    <source>
        <strain>Bristol N2</strain>
    </source>
</reference>
<reference key="3">
    <citation type="journal article" date="2005" name="Glycobiology">
        <title>Identification of the hydrophobic glycoproteins of Caenorhabditis elegans.</title>
        <authorList>
            <person name="Fan X."/>
            <person name="She Y.-M."/>
            <person name="Bagshaw R.D."/>
            <person name="Callahan J.W."/>
            <person name="Schachter H."/>
            <person name="Mahuran D.J."/>
        </authorList>
    </citation>
    <scope>GLYCOSYLATION [LARGE SCALE ANALYSIS] AT ASN-178</scope>
    <scope>IDENTIFICATION BY MASS SPECTROMETRY</scope>
</reference>
<reference key="4">
    <citation type="journal article" date="2007" name="Mol. Cell. Proteomics">
        <title>Proteomics reveals N-linked glycoprotein diversity in Caenorhabditis elegans and suggests an atypical translocation mechanism for integral membrane proteins.</title>
        <authorList>
            <person name="Kaji H."/>
            <person name="Kamiie J."/>
            <person name="Kawakami H."/>
            <person name="Kido K."/>
            <person name="Yamauchi Y."/>
            <person name="Shinkawa T."/>
            <person name="Taoka M."/>
            <person name="Takahashi N."/>
            <person name="Isobe T."/>
        </authorList>
    </citation>
    <scope>GLYCOSYLATION [LARGE SCALE ANALYSIS] AT ASN-91; ASN-141 AND ASN-178</scope>
    <scope>IDENTIFICATION BY MASS SPECTROMETRY</scope>
    <source>
        <strain>Bristol N2</strain>
    </source>
</reference>
<accession>O62146</accession>
<feature type="signal peptide" evidence="2">
    <location>
        <begin position="1"/>
        <end position="42"/>
    </location>
</feature>
<feature type="chain" id="PRO_0000286114" description="Putative phospholipase B-like 2">
    <location>
        <begin position="43"/>
        <end position="582"/>
    </location>
</feature>
<feature type="glycosylation site" description="N-linked (GlcNAc...) asparagine" evidence="3 5">
    <location>
        <position position="91"/>
    </location>
</feature>
<feature type="glycosylation site" description="N-linked (GlcNAc...) asparagine" evidence="5">
    <location>
        <position position="141"/>
    </location>
</feature>
<feature type="glycosylation site" description="N-linked (GlcNAc...) asparagine" evidence="4 5">
    <location>
        <position position="178"/>
    </location>
</feature>
<feature type="glycosylation site" description="N-linked (GlcNAc...) asparagine" evidence="2">
    <location>
        <position position="224"/>
    </location>
</feature>
<feature type="glycosylation site" description="N-linked (GlcNAc...) asparagine" evidence="2">
    <location>
        <position position="318"/>
    </location>
</feature>
<feature type="glycosylation site" description="N-linked (GlcNAc...) asparagine" evidence="2">
    <location>
        <position position="502"/>
    </location>
</feature>
<feature type="disulfide bond" evidence="1">
    <location>
        <begin position="139"/>
        <end position="146"/>
    </location>
</feature>
<feature type="disulfide bond" evidence="1">
    <location>
        <begin position="480"/>
        <end position="482"/>
    </location>
</feature>
<dbReference type="EC" id="3.1.1.-"/>
<dbReference type="EMBL" id="Z83104">
    <property type="protein sequence ID" value="CAB05478.2"/>
    <property type="molecule type" value="Genomic_DNA"/>
</dbReference>
<dbReference type="PIR" id="T20630">
    <property type="entry name" value="T20630"/>
</dbReference>
<dbReference type="RefSeq" id="NP_510509.2">
    <property type="nucleotide sequence ID" value="NM_078108.4"/>
</dbReference>
<dbReference type="SMR" id="O62146"/>
<dbReference type="BioGRID" id="46502">
    <property type="interactions" value="46"/>
</dbReference>
<dbReference type="FunCoup" id="O62146">
    <property type="interactions" value="358"/>
</dbReference>
<dbReference type="STRING" id="6239.F09B12.3.1"/>
<dbReference type="iPTMnet" id="O62146"/>
<dbReference type="PaxDb" id="6239-F09B12.3"/>
<dbReference type="PeptideAtlas" id="O62146"/>
<dbReference type="EnsemblMetazoa" id="F09B12.3.1">
    <property type="protein sequence ID" value="F09B12.3.1"/>
    <property type="gene ID" value="WBGene00008607"/>
</dbReference>
<dbReference type="GeneID" id="181605"/>
<dbReference type="KEGG" id="cel:CELE_F09B12.3"/>
<dbReference type="UCSC" id="F09B12.3">
    <property type="organism name" value="c. elegans"/>
</dbReference>
<dbReference type="AGR" id="WB:WBGene00008607"/>
<dbReference type="CTD" id="181605"/>
<dbReference type="WormBase" id="F09B12.3">
    <property type="protein sequence ID" value="CE31469"/>
    <property type="gene ID" value="WBGene00008607"/>
</dbReference>
<dbReference type="eggNOG" id="KOG3774">
    <property type="taxonomic scope" value="Eukaryota"/>
</dbReference>
<dbReference type="GeneTree" id="ENSGT00530000063509"/>
<dbReference type="HOGENOM" id="CLU_027106_4_0_1"/>
<dbReference type="InParanoid" id="O62146"/>
<dbReference type="OMA" id="ISQVTMS"/>
<dbReference type="OrthoDB" id="443524at2759"/>
<dbReference type="PhylomeDB" id="O62146"/>
<dbReference type="PRO" id="PR:O62146"/>
<dbReference type="Proteomes" id="UP000001940">
    <property type="component" value="Chromosome X"/>
</dbReference>
<dbReference type="Bgee" id="WBGene00008607">
    <property type="expression patterns" value="Expressed in larva and 4 other cell types or tissues"/>
</dbReference>
<dbReference type="GO" id="GO:0005576">
    <property type="term" value="C:extracellular region"/>
    <property type="evidence" value="ECO:0000318"/>
    <property type="project" value="GO_Central"/>
</dbReference>
<dbReference type="GO" id="GO:0004620">
    <property type="term" value="F:phospholipase activity"/>
    <property type="evidence" value="ECO:0000318"/>
    <property type="project" value="GO_Central"/>
</dbReference>
<dbReference type="GO" id="GO:0009395">
    <property type="term" value="P:phospholipid catabolic process"/>
    <property type="evidence" value="ECO:0000318"/>
    <property type="project" value="GO_Central"/>
</dbReference>
<dbReference type="Gene3D" id="3.60.60.30">
    <property type="match status" value="1"/>
</dbReference>
<dbReference type="InterPro" id="IPR007000">
    <property type="entry name" value="PLipase_B-like"/>
</dbReference>
<dbReference type="PANTHER" id="PTHR12370:SF7">
    <property type="entry name" value="PHOSPHOLIPASE B-LIKE 2-RELATED"/>
    <property type="match status" value="1"/>
</dbReference>
<dbReference type="PANTHER" id="PTHR12370">
    <property type="entry name" value="PHOSPHOLIPASE B-RELATED"/>
    <property type="match status" value="1"/>
</dbReference>
<dbReference type="Pfam" id="PF04916">
    <property type="entry name" value="Phospholip_B"/>
    <property type="match status" value="1"/>
</dbReference>
<comment type="function">
    <text evidence="1">Putative phospholipase.</text>
</comment>
<comment type="subcellular location">
    <subcellularLocation>
        <location evidence="6">Secreted</location>
    </subcellularLocation>
</comment>
<comment type="similarity">
    <text evidence="6">Belongs to the phospholipase B-like family.</text>
</comment>
<sequence length="582" mass="66638">MTRLIRSKKQFLIRSLHSVFYYLGSLLHSTFEMNVFIGLLLATVVASQSSEGRDESYTYKQLCIVDDKPQVLDGFDCRNQVAVARWQNAVNTTGWTFLEVETKENYCPQLQAYSAGYLEGLLSKTVLTYHLKNAQEDYCKNFTGYCSRLSDFLTENQKWIQSSLETVAPDDLYWGAVNRTYHQVSGLIDAYEGREFKPRITYELHPILYLNLNGDFYDLEKKLNKTRDPAFEQTGGKCSGLIKVAPGNADLFISQVTMSGFQNMLRVIKLYKFGYDRQFYPGYASSFSSYPGLLYSSDDFALQTSGLAVIETTISVFNTSLFENTKPVGQLPTWIRAIVSNQLARDAREWCKLYSLYNSGTYNNQWAVLDYKKFKPNQPLPKNGLFYVLEQMPGKIVYSDLTWFVEKYSYFPSYNIPFFKEITEISGFIGQAAKMGDWFKWGASPRAKIFERDHGNVHDLDSLTALMRYNDYKNDEFSKCKCNPPYSAEAGISARGDLNPANGTYEFPGQGHVNHGALDYKGTNVELMKKLQFVAQGGPTWGKVPSFKWSEFDFKDKVNHVGHPDEWKFNTLVHKWETEINA</sequence>
<organism>
    <name type="scientific">Caenorhabditis elegans</name>
    <dbReference type="NCBI Taxonomy" id="6239"/>
    <lineage>
        <taxon>Eukaryota</taxon>
        <taxon>Metazoa</taxon>
        <taxon>Ecdysozoa</taxon>
        <taxon>Nematoda</taxon>
        <taxon>Chromadorea</taxon>
        <taxon>Rhabditida</taxon>
        <taxon>Rhabditina</taxon>
        <taxon>Rhabditomorpha</taxon>
        <taxon>Rhabditoidea</taxon>
        <taxon>Rhabditidae</taxon>
        <taxon>Peloderinae</taxon>
        <taxon>Caenorhabditis</taxon>
    </lineage>
</organism>
<keyword id="KW-1015">Disulfide bond</keyword>
<keyword id="KW-0325">Glycoprotein</keyword>
<keyword id="KW-0378">Hydrolase</keyword>
<keyword id="KW-0442">Lipid degradation</keyword>
<keyword id="KW-0443">Lipid metabolism</keyword>
<keyword id="KW-1185">Reference proteome</keyword>
<keyword id="KW-0964">Secreted</keyword>
<keyword id="KW-0732">Signal</keyword>
<proteinExistence type="evidence at protein level"/>
<name>PLBL2_CAEEL</name>
<gene>
    <name type="ORF">F09B12.3</name>
</gene>
<protein>
    <recommendedName>
        <fullName>Putative phospholipase B-like 2</fullName>
        <ecNumber>3.1.1.-</ecNumber>
    </recommendedName>
    <alternativeName>
        <fullName>LAMA-like protein 2</fullName>
    </alternativeName>
    <alternativeName>
        <fullName>Lamina ancestor homolog 2</fullName>
    </alternativeName>
</protein>